<dbReference type="EC" id="1.3.5.2" evidence="1"/>
<dbReference type="EMBL" id="CP000713">
    <property type="protein sequence ID" value="ABQ93884.1"/>
    <property type="molecule type" value="Genomic_DNA"/>
</dbReference>
<dbReference type="SMR" id="A5WDZ3"/>
<dbReference type="STRING" id="349106.PsycPRwf_0934"/>
<dbReference type="KEGG" id="prw:PsycPRwf_0934"/>
<dbReference type="eggNOG" id="COG0167">
    <property type="taxonomic scope" value="Bacteria"/>
</dbReference>
<dbReference type="HOGENOM" id="CLU_013640_2_0_6"/>
<dbReference type="UniPathway" id="UPA00070">
    <property type="reaction ID" value="UER00946"/>
</dbReference>
<dbReference type="GO" id="GO:0005737">
    <property type="term" value="C:cytoplasm"/>
    <property type="evidence" value="ECO:0007669"/>
    <property type="project" value="InterPro"/>
</dbReference>
<dbReference type="GO" id="GO:0005886">
    <property type="term" value="C:plasma membrane"/>
    <property type="evidence" value="ECO:0007669"/>
    <property type="project" value="UniProtKB-SubCell"/>
</dbReference>
<dbReference type="GO" id="GO:0106430">
    <property type="term" value="F:dihydroorotate dehydrogenase (quinone) activity"/>
    <property type="evidence" value="ECO:0007669"/>
    <property type="project" value="UniProtKB-EC"/>
</dbReference>
<dbReference type="GO" id="GO:0006207">
    <property type="term" value="P:'de novo' pyrimidine nucleobase biosynthetic process"/>
    <property type="evidence" value="ECO:0007669"/>
    <property type="project" value="InterPro"/>
</dbReference>
<dbReference type="GO" id="GO:0044205">
    <property type="term" value="P:'de novo' UMP biosynthetic process"/>
    <property type="evidence" value="ECO:0007669"/>
    <property type="project" value="UniProtKB-UniRule"/>
</dbReference>
<dbReference type="CDD" id="cd04738">
    <property type="entry name" value="DHOD_2_like"/>
    <property type="match status" value="1"/>
</dbReference>
<dbReference type="FunFam" id="3.20.20.70:FF:000028">
    <property type="entry name" value="Dihydroorotate dehydrogenase (quinone)"/>
    <property type="match status" value="1"/>
</dbReference>
<dbReference type="Gene3D" id="3.20.20.70">
    <property type="entry name" value="Aldolase class I"/>
    <property type="match status" value="1"/>
</dbReference>
<dbReference type="HAMAP" id="MF_00225">
    <property type="entry name" value="DHO_dh_type2"/>
    <property type="match status" value="1"/>
</dbReference>
<dbReference type="InterPro" id="IPR013785">
    <property type="entry name" value="Aldolase_TIM"/>
</dbReference>
<dbReference type="InterPro" id="IPR050074">
    <property type="entry name" value="DHO_dehydrogenase"/>
</dbReference>
<dbReference type="InterPro" id="IPR012135">
    <property type="entry name" value="Dihydroorotate_DH_1_2"/>
</dbReference>
<dbReference type="InterPro" id="IPR005719">
    <property type="entry name" value="Dihydroorotate_DH_2"/>
</dbReference>
<dbReference type="InterPro" id="IPR005720">
    <property type="entry name" value="Dihydroorotate_DH_cat"/>
</dbReference>
<dbReference type="InterPro" id="IPR001295">
    <property type="entry name" value="Dihydroorotate_DH_CS"/>
</dbReference>
<dbReference type="NCBIfam" id="NF003644">
    <property type="entry name" value="PRK05286.1-1"/>
    <property type="match status" value="1"/>
</dbReference>
<dbReference type="NCBIfam" id="NF003645">
    <property type="entry name" value="PRK05286.1-2"/>
    <property type="match status" value="1"/>
</dbReference>
<dbReference type="NCBIfam" id="NF003646">
    <property type="entry name" value="PRK05286.1-4"/>
    <property type="match status" value="1"/>
</dbReference>
<dbReference type="NCBIfam" id="NF003652">
    <property type="entry name" value="PRK05286.2-5"/>
    <property type="match status" value="1"/>
</dbReference>
<dbReference type="NCBIfam" id="TIGR01036">
    <property type="entry name" value="pyrD_sub2"/>
    <property type="match status" value="1"/>
</dbReference>
<dbReference type="PANTHER" id="PTHR48109:SF4">
    <property type="entry name" value="DIHYDROOROTATE DEHYDROGENASE (QUINONE), MITOCHONDRIAL"/>
    <property type="match status" value="1"/>
</dbReference>
<dbReference type="PANTHER" id="PTHR48109">
    <property type="entry name" value="DIHYDROOROTATE DEHYDROGENASE (QUINONE), MITOCHONDRIAL-RELATED"/>
    <property type="match status" value="1"/>
</dbReference>
<dbReference type="Pfam" id="PF01180">
    <property type="entry name" value="DHO_dh"/>
    <property type="match status" value="1"/>
</dbReference>
<dbReference type="PIRSF" id="PIRSF000164">
    <property type="entry name" value="DHO_oxidase"/>
    <property type="match status" value="1"/>
</dbReference>
<dbReference type="SUPFAM" id="SSF51395">
    <property type="entry name" value="FMN-linked oxidoreductases"/>
    <property type="match status" value="1"/>
</dbReference>
<dbReference type="PROSITE" id="PS00911">
    <property type="entry name" value="DHODEHASE_1"/>
    <property type="match status" value="1"/>
</dbReference>
<dbReference type="PROSITE" id="PS00912">
    <property type="entry name" value="DHODEHASE_2"/>
    <property type="match status" value="1"/>
</dbReference>
<reference key="1">
    <citation type="submission" date="2007-05" db="EMBL/GenBank/DDBJ databases">
        <title>Complete sequence of chromosome of Psychrobacter sp. PRwf-1.</title>
        <authorList>
            <consortium name="US DOE Joint Genome Institute"/>
            <person name="Copeland A."/>
            <person name="Lucas S."/>
            <person name="Lapidus A."/>
            <person name="Barry K."/>
            <person name="Detter J.C."/>
            <person name="Glavina del Rio T."/>
            <person name="Hammon N."/>
            <person name="Israni S."/>
            <person name="Dalin E."/>
            <person name="Tice H."/>
            <person name="Pitluck S."/>
            <person name="Chain P."/>
            <person name="Malfatti S."/>
            <person name="Shin M."/>
            <person name="Vergez L."/>
            <person name="Schmutz J."/>
            <person name="Larimer F."/>
            <person name="Land M."/>
            <person name="Hauser L."/>
            <person name="Kyrpides N."/>
            <person name="Kim E."/>
            <person name="Tiedje J."/>
            <person name="Richardson P."/>
        </authorList>
    </citation>
    <scope>NUCLEOTIDE SEQUENCE [LARGE SCALE GENOMIC DNA]</scope>
    <source>
        <strain>PRwf-1</strain>
    </source>
</reference>
<proteinExistence type="inferred from homology"/>
<name>PYRD_PSYWF</name>
<feature type="chain" id="PRO_1000071768" description="Dihydroorotate dehydrogenase (quinone)">
    <location>
        <begin position="1"/>
        <end position="344"/>
    </location>
</feature>
<feature type="active site" description="Nucleophile" evidence="1">
    <location>
        <position position="174"/>
    </location>
</feature>
<feature type="binding site" evidence="1">
    <location>
        <begin position="61"/>
        <end position="65"/>
    </location>
    <ligand>
        <name>FMN</name>
        <dbReference type="ChEBI" id="CHEBI:58210"/>
    </ligand>
</feature>
<feature type="binding site" evidence="1">
    <location>
        <position position="65"/>
    </location>
    <ligand>
        <name>substrate</name>
    </ligand>
</feature>
<feature type="binding site" evidence="1">
    <location>
        <position position="85"/>
    </location>
    <ligand>
        <name>FMN</name>
        <dbReference type="ChEBI" id="CHEBI:58210"/>
    </ligand>
</feature>
<feature type="binding site" evidence="1">
    <location>
        <begin position="110"/>
        <end position="114"/>
    </location>
    <ligand>
        <name>substrate</name>
    </ligand>
</feature>
<feature type="binding site" evidence="1">
    <location>
        <position position="138"/>
    </location>
    <ligand>
        <name>FMN</name>
        <dbReference type="ChEBI" id="CHEBI:58210"/>
    </ligand>
</feature>
<feature type="binding site" evidence="1">
    <location>
        <position position="171"/>
    </location>
    <ligand>
        <name>FMN</name>
        <dbReference type="ChEBI" id="CHEBI:58210"/>
    </ligand>
</feature>
<feature type="binding site" evidence="1">
    <location>
        <position position="171"/>
    </location>
    <ligand>
        <name>substrate</name>
    </ligand>
</feature>
<feature type="binding site" evidence="1">
    <location>
        <position position="176"/>
    </location>
    <ligand>
        <name>substrate</name>
    </ligand>
</feature>
<feature type="binding site" evidence="1">
    <location>
        <position position="216"/>
    </location>
    <ligand>
        <name>FMN</name>
        <dbReference type="ChEBI" id="CHEBI:58210"/>
    </ligand>
</feature>
<feature type="binding site" evidence="1">
    <location>
        <position position="244"/>
    </location>
    <ligand>
        <name>FMN</name>
        <dbReference type="ChEBI" id="CHEBI:58210"/>
    </ligand>
</feature>
<feature type="binding site" evidence="1">
    <location>
        <begin position="245"/>
        <end position="246"/>
    </location>
    <ligand>
        <name>substrate</name>
    </ligand>
</feature>
<feature type="binding site" evidence="1">
    <location>
        <position position="267"/>
    </location>
    <ligand>
        <name>FMN</name>
        <dbReference type="ChEBI" id="CHEBI:58210"/>
    </ligand>
</feature>
<feature type="binding site" evidence="1">
    <location>
        <position position="296"/>
    </location>
    <ligand>
        <name>FMN</name>
        <dbReference type="ChEBI" id="CHEBI:58210"/>
    </ligand>
</feature>
<feature type="binding site" evidence="1">
    <location>
        <begin position="317"/>
        <end position="318"/>
    </location>
    <ligand>
        <name>FMN</name>
        <dbReference type="ChEBI" id="CHEBI:58210"/>
    </ligand>
</feature>
<evidence type="ECO:0000255" key="1">
    <source>
        <dbReference type="HAMAP-Rule" id="MF_00225"/>
    </source>
</evidence>
<keyword id="KW-1003">Cell membrane</keyword>
<keyword id="KW-0285">Flavoprotein</keyword>
<keyword id="KW-0288">FMN</keyword>
<keyword id="KW-0472">Membrane</keyword>
<keyword id="KW-0560">Oxidoreductase</keyword>
<keyword id="KW-0665">Pyrimidine biosynthesis</keyword>
<gene>
    <name evidence="1" type="primary">pyrD</name>
    <name type="ordered locus">PsycPRwf_0934</name>
</gene>
<protein>
    <recommendedName>
        <fullName evidence="1">Dihydroorotate dehydrogenase (quinone)</fullName>
        <ecNumber evidence="1">1.3.5.2</ecNumber>
    </recommendedName>
    <alternativeName>
        <fullName evidence="1">DHOdehase</fullName>
        <shortName evidence="1">DHOD</shortName>
        <shortName evidence="1">DHODase</shortName>
    </alternativeName>
    <alternativeName>
        <fullName evidence="1">Dihydroorotate oxidase</fullName>
    </alternativeName>
</protein>
<comment type="function">
    <text evidence="1">Catalyzes the conversion of dihydroorotate to orotate with quinone as electron acceptor.</text>
</comment>
<comment type="catalytic activity">
    <reaction evidence="1">
        <text>(S)-dihydroorotate + a quinone = orotate + a quinol</text>
        <dbReference type="Rhea" id="RHEA:30187"/>
        <dbReference type="ChEBI" id="CHEBI:24646"/>
        <dbReference type="ChEBI" id="CHEBI:30839"/>
        <dbReference type="ChEBI" id="CHEBI:30864"/>
        <dbReference type="ChEBI" id="CHEBI:132124"/>
        <dbReference type="EC" id="1.3.5.2"/>
    </reaction>
</comment>
<comment type="cofactor">
    <cofactor evidence="1">
        <name>FMN</name>
        <dbReference type="ChEBI" id="CHEBI:58210"/>
    </cofactor>
    <text evidence="1">Binds 1 FMN per subunit.</text>
</comment>
<comment type="pathway">
    <text evidence="1">Pyrimidine metabolism; UMP biosynthesis via de novo pathway; orotate from (S)-dihydroorotate (quinone route): step 1/1.</text>
</comment>
<comment type="subunit">
    <text evidence="1">Monomer.</text>
</comment>
<comment type="subcellular location">
    <subcellularLocation>
        <location evidence="1">Cell membrane</location>
        <topology evidence="1">Peripheral membrane protein</topology>
    </subcellularLocation>
</comment>
<comment type="similarity">
    <text evidence="1">Belongs to the dihydroorotate dehydrogenase family. Type 2 subfamily.</text>
</comment>
<sequence length="344" mass="37856">MSYALLRPFLFNLDPEHAHELTLQLLEKAHKARALGFIYSQQSLPTECMGLQFSNPVGLAAGLDKNGQYIDALAELGFGFIEVGTVTPRPQQGNEKPRLFRIKEADAIINRMGFNNLGVDRLIQNVQRAKYKGNIGINIGKNAVTPVENAADDYIYCLDRVYPHASYITVNISSPNTKNLRDLQSGEALTELLDSIKNRHSQLATEYGFYVPMVLKVAPDLTPEQVDYIANQLIEFDIDGLIATNTTLSRTGVEDLPFGDEAGGLSGRPVGHLSTQIIEQFYERLEGKVPIIGVGGIDSGDKAVRKLNAGATMIQLYSGMIYQGPKLVQQCVEAITSHRDAMML</sequence>
<accession>A5WDZ3</accession>
<organism>
    <name type="scientific">Psychrobacter sp. (strain PRwf-1)</name>
    <dbReference type="NCBI Taxonomy" id="349106"/>
    <lineage>
        <taxon>Bacteria</taxon>
        <taxon>Pseudomonadati</taxon>
        <taxon>Pseudomonadota</taxon>
        <taxon>Gammaproteobacteria</taxon>
        <taxon>Moraxellales</taxon>
        <taxon>Moraxellaceae</taxon>
        <taxon>Psychrobacter</taxon>
    </lineage>
</organism>